<accession>P29527</accession>
<keyword id="KW-0007">Acetylation</keyword>
<keyword id="KW-0551">Lipid droplet</keyword>
<keyword id="KW-0472">Membrane</keyword>
<keyword id="KW-1185">Reference proteome</keyword>
<keyword id="KW-0812">Transmembrane</keyword>
<keyword id="KW-1133">Transmembrane helix</keyword>
<feature type="initiator methionine" description="Removed" evidence="1">
    <location>
        <position position="1"/>
    </location>
</feature>
<feature type="chain" id="PRO_0000108138" description="Oleosin 18.2 kDa">
    <location>
        <begin position="2"/>
        <end position="168"/>
    </location>
</feature>
<feature type="transmembrane region" description="Helical" evidence="2">
    <location>
        <begin position="43"/>
        <end position="63"/>
    </location>
</feature>
<feature type="transmembrane region" description="Helical" evidence="2">
    <location>
        <begin position="76"/>
        <end position="96"/>
    </location>
</feature>
<feature type="transmembrane region" description="Helical" evidence="2">
    <location>
        <begin position="97"/>
        <end position="117"/>
    </location>
</feature>
<feature type="region of interest" description="Polar">
    <location>
        <begin position="2"/>
        <end position="45"/>
    </location>
</feature>
<feature type="region of interest" description="Hydrophobic">
    <location>
        <begin position="46"/>
        <end position="117"/>
    </location>
</feature>
<feature type="modified residue" description="N-acetylalanine" evidence="1">
    <location>
        <position position="2"/>
    </location>
</feature>
<organism>
    <name type="scientific">Gossypium hirsutum</name>
    <name type="common">Upland cotton</name>
    <name type="synonym">Gossypium mexicanum</name>
    <dbReference type="NCBI Taxonomy" id="3635"/>
    <lineage>
        <taxon>Eukaryota</taxon>
        <taxon>Viridiplantae</taxon>
        <taxon>Streptophyta</taxon>
        <taxon>Embryophyta</taxon>
        <taxon>Tracheophyta</taxon>
        <taxon>Spermatophyta</taxon>
        <taxon>Magnoliopsida</taxon>
        <taxon>eudicotyledons</taxon>
        <taxon>Gunneridae</taxon>
        <taxon>Pentapetalae</taxon>
        <taxon>rosids</taxon>
        <taxon>malvids</taxon>
        <taxon>Malvales</taxon>
        <taxon>Malvaceae</taxon>
        <taxon>Malvoideae</taxon>
        <taxon>Gossypium</taxon>
    </lineage>
</organism>
<sequence length="168" mass="17873">MAEVRDRNLPHQVQVHPQYRLDNTTGGGYGAKNYHSGPSTSQVLAVLTLLPIGGTLLALAGLTLAGTVIGLMLATPLFIIFSPVLVPAAIAIAMAVTGFLSSGAFGLTGLSSLSYVLNRLRYATGTEQLDLDHAKRRVQDMTEYVGQKTKEVGQKIENKAHEGQVGRT</sequence>
<protein>
    <recommendedName>
        <fullName>Oleosin 18.2 kDa</fullName>
    </recommendedName>
</protein>
<name>OLEO6_GOSHI</name>
<reference key="1">
    <citation type="journal article" date="1993" name="Plant Physiol.">
        <title>Cotton (Gossypium hirsutum) MatP6 and MatP7 oleosin genes.</title>
        <authorList>
            <person name="Hughes D.W."/>
            <person name="Wang H.Y."/>
            <person name="Galau G.A."/>
        </authorList>
    </citation>
    <scope>NUCLEOTIDE SEQUENCE [MRNA]</scope>
    <source>
        <strain>cv. Coker 201</strain>
    </source>
</reference>
<gene>
    <name type="primary">MATP6-A</name>
</gene>
<comment type="function">
    <text evidence="1">May have a structural role to stabilize the lipid body during desiccation of the seed by preventing coalescence of the oil. Probably interacts with both lipid and phospholipid moieties of lipid bodies. May also provide recognition signals for specific lipase anchorage in lipolysis during seedling growth (By similarity).</text>
</comment>
<comment type="subcellular location">
    <subcellularLocation>
        <location evidence="1">Lipid droplet</location>
    </subcellularLocation>
    <subcellularLocation>
        <location evidence="1">Membrane</location>
        <topology evidence="1">Multi-pass membrane protein</topology>
    </subcellularLocation>
    <text evidence="1">Surface of oil bodies. Oleosins exist at a monolayer lipid/water interface (By similarity).</text>
</comment>
<comment type="similarity">
    <text evidence="3">Belongs to the oleosin family.</text>
</comment>
<evidence type="ECO:0000250" key="1"/>
<evidence type="ECO:0000255" key="2"/>
<evidence type="ECO:0000305" key="3"/>
<dbReference type="EMBL" id="L00935">
    <property type="protein sequence ID" value="AAA18524.1"/>
    <property type="molecule type" value="mRNA"/>
</dbReference>
<dbReference type="EMBL" id="L00936">
    <property type="protein sequence ID" value="AAA18525.1"/>
    <property type="molecule type" value="Unassigned_DNA"/>
</dbReference>
<dbReference type="PIR" id="T10788">
    <property type="entry name" value="T10788"/>
</dbReference>
<dbReference type="RefSeq" id="XP_016727497.1">
    <property type="nucleotide sequence ID" value="XM_016872008.1"/>
</dbReference>
<dbReference type="SMR" id="P29527"/>
<dbReference type="STRING" id="3635.P29527"/>
<dbReference type="PaxDb" id="3635-P29527"/>
<dbReference type="GeneID" id="107938770"/>
<dbReference type="KEGG" id="ghi:107938770"/>
<dbReference type="Proteomes" id="UP000189702">
    <property type="component" value="Unplaced"/>
</dbReference>
<dbReference type="GO" id="GO:0016020">
    <property type="term" value="C:membrane"/>
    <property type="evidence" value="ECO:0007669"/>
    <property type="project" value="UniProtKB-SubCell"/>
</dbReference>
<dbReference type="GO" id="GO:0012511">
    <property type="term" value="C:monolayer-surrounded lipid storage body"/>
    <property type="evidence" value="ECO:0000318"/>
    <property type="project" value="GO_Central"/>
</dbReference>
<dbReference type="GO" id="GO:0019915">
    <property type="term" value="P:lipid storage"/>
    <property type="evidence" value="ECO:0000318"/>
    <property type="project" value="GO_Central"/>
</dbReference>
<dbReference type="GO" id="GO:0050826">
    <property type="term" value="P:response to freezing"/>
    <property type="evidence" value="ECO:0000318"/>
    <property type="project" value="GO_Central"/>
</dbReference>
<dbReference type="GO" id="GO:0010344">
    <property type="term" value="P:seed oilbody biogenesis"/>
    <property type="evidence" value="ECO:0000318"/>
    <property type="project" value="GO_Central"/>
</dbReference>
<dbReference type="InterPro" id="IPR000136">
    <property type="entry name" value="Oleosin"/>
</dbReference>
<dbReference type="PANTHER" id="PTHR33203">
    <property type="entry name" value="OLEOSIN"/>
    <property type="match status" value="1"/>
</dbReference>
<dbReference type="PANTHER" id="PTHR33203:SF63">
    <property type="entry name" value="OLEOSIN 18.2 KDA"/>
    <property type="match status" value="1"/>
</dbReference>
<dbReference type="Pfam" id="PF01277">
    <property type="entry name" value="Oleosin"/>
    <property type="match status" value="1"/>
</dbReference>
<dbReference type="PROSITE" id="PS00811">
    <property type="entry name" value="OLEOSINS"/>
    <property type="match status" value="1"/>
</dbReference>
<proteinExistence type="evidence at transcript level"/>